<sequence length="132" mass="14748">MTDDAVTGSQDDAEIEIRFNSDGLVPAIAQDADSGEVLMLAYVSPTALKRTRETGQAHYYSRSREELWKKGETSGHTQHIREIRADCDADTILYLVEQTGGACHTGHQSCFYRTLDGTEVTERVFDPETVYE</sequence>
<gene>
    <name evidence="1" type="primary">hisI</name>
    <name type="ordered locus">HQ_1022A</name>
</gene>
<reference key="1">
    <citation type="journal article" date="2006" name="BMC Genomics">
        <title>The genome of the square archaeon Haloquadratum walsbyi: life at the limits of water activity.</title>
        <authorList>
            <person name="Bolhuis H."/>
            <person name="Palm P."/>
            <person name="Wende A."/>
            <person name="Falb M."/>
            <person name="Rampp M."/>
            <person name="Rodriguez-Valera F."/>
            <person name="Pfeiffer F."/>
            <person name="Oesterhelt D."/>
        </authorList>
    </citation>
    <scope>NUCLEOTIDE SEQUENCE [LARGE SCALE GENOMIC DNA]</scope>
    <source>
        <strain>DSM 16790 / HBSQ001</strain>
    </source>
</reference>
<feature type="chain" id="PRO_0000319725" description="Phosphoribosyl-AMP cyclohydrolase">
    <location>
        <begin position="1"/>
        <end position="132"/>
    </location>
</feature>
<feature type="binding site" evidence="1">
    <location>
        <position position="86"/>
    </location>
    <ligand>
        <name>Mg(2+)</name>
        <dbReference type="ChEBI" id="CHEBI:18420"/>
    </ligand>
</feature>
<feature type="binding site" evidence="1">
    <location>
        <position position="87"/>
    </location>
    <ligand>
        <name>Zn(2+)</name>
        <dbReference type="ChEBI" id="CHEBI:29105"/>
        <note>ligand shared between dimeric partners</note>
    </ligand>
</feature>
<feature type="binding site" evidence="1">
    <location>
        <position position="88"/>
    </location>
    <ligand>
        <name>Mg(2+)</name>
        <dbReference type="ChEBI" id="CHEBI:18420"/>
    </ligand>
</feature>
<feature type="binding site" evidence="1">
    <location>
        <position position="90"/>
    </location>
    <ligand>
        <name>Mg(2+)</name>
        <dbReference type="ChEBI" id="CHEBI:18420"/>
    </ligand>
</feature>
<feature type="binding site" evidence="1">
    <location>
        <position position="103"/>
    </location>
    <ligand>
        <name>Zn(2+)</name>
        <dbReference type="ChEBI" id="CHEBI:29105"/>
        <note>ligand shared between dimeric partners</note>
    </ligand>
</feature>
<feature type="binding site" evidence="1">
    <location>
        <position position="110"/>
    </location>
    <ligand>
        <name>Zn(2+)</name>
        <dbReference type="ChEBI" id="CHEBI:29105"/>
        <note>ligand shared between dimeric partners</note>
    </ligand>
</feature>
<proteinExistence type="inferred from homology"/>
<dbReference type="EC" id="3.5.4.19" evidence="1"/>
<dbReference type="EMBL" id="AM180088">
    <property type="protein sequence ID" value="CAJ51152.1"/>
    <property type="molecule type" value="Genomic_DNA"/>
</dbReference>
<dbReference type="RefSeq" id="WP_011570319.1">
    <property type="nucleotide sequence ID" value="NC_008212.1"/>
</dbReference>
<dbReference type="SMR" id="Q18DH0"/>
<dbReference type="STRING" id="362976.HQ_1022A"/>
<dbReference type="GeneID" id="4194124"/>
<dbReference type="KEGG" id="hwa:HQ_1022A"/>
<dbReference type="eggNOG" id="arCOG02676">
    <property type="taxonomic scope" value="Archaea"/>
</dbReference>
<dbReference type="HOGENOM" id="CLU_048577_5_0_2"/>
<dbReference type="UniPathway" id="UPA00031">
    <property type="reaction ID" value="UER00008"/>
</dbReference>
<dbReference type="Proteomes" id="UP000001975">
    <property type="component" value="Chromosome"/>
</dbReference>
<dbReference type="GO" id="GO:0005737">
    <property type="term" value="C:cytoplasm"/>
    <property type="evidence" value="ECO:0007669"/>
    <property type="project" value="UniProtKB-SubCell"/>
</dbReference>
<dbReference type="GO" id="GO:0000287">
    <property type="term" value="F:magnesium ion binding"/>
    <property type="evidence" value="ECO:0007669"/>
    <property type="project" value="UniProtKB-UniRule"/>
</dbReference>
<dbReference type="GO" id="GO:0004635">
    <property type="term" value="F:phosphoribosyl-AMP cyclohydrolase activity"/>
    <property type="evidence" value="ECO:0007669"/>
    <property type="project" value="UniProtKB-UniRule"/>
</dbReference>
<dbReference type="GO" id="GO:0008270">
    <property type="term" value="F:zinc ion binding"/>
    <property type="evidence" value="ECO:0007669"/>
    <property type="project" value="UniProtKB-UniRule"/>
</dbReference>
<dbReference type="GO" id="GO:0000105">
    <property type="term" value="P:L-histidine biosynthetic process"/>
    <property type="evidence" value="ECO:0007669"/>
    <property type="project" value="UniProtKB-UniRule"/>
</dbReference>
<dbReference type="FunFam" id="3.10.20.810:FF:000001">
    <property type="entry name" value="Histidine biosynthesis bifunctional protein HisIE"/>
    <property type="match status" value="1"/>
</dbReference>
<dbReference type="Gene3D" id="4.10.80.70">
    <property type="match status" value="1"/>
</dbReference>
<dbReference type="Gene3D" id="3.10.20.810">
    <property type="entry name" value="Phosphoribosyl-AMP cyclohydrolase"/>
    <property type="match status" value="1"/>
</dbReference>
<dbReference type="HAMAP" id="MF_01021">
    <property type="entry name" value="HisI"/>
    <property type="match status" value="1"/>
</dbReference>
<dbReference type="InterPro" id="IPR026660">
    <property type="entry name" value="PRA-CH"/>
</dbReference>
<dbReference type="InterPro" id="IPR002496">
    <property type="entry name" value="PRib_AMP_CycHydrolase_dom"/>
</dbReference>
<dbReference type="InterPro" id="IPR038019">
    <property type="entry name" value="PRib_AMP_CycHydrolase_sf"/>
</dbReference>
<dbReference type="NCBIfam" id="NF000768">
    <property type="entry name" value="PRK00051.1"/>
    <property type="match status" value="1"/>
</dbReference>
<dbReference type="PANTHER" id="PTHR42945">
    <property type="entry name" value="HISTIDINE BIOSYNTHESIS BIFUNCTIONAL PROTEIN"/>
    <property type="match status" value="1"/>
</dbReference>
<dbReference type="PANTHER" id="PTHR42945:SF1">
    <property type="entry name" value="HISTIDINE BIOSYNTHESIS BIFUNCTIONAL PROTEIN HIS7"/>
    <property type="match status" value="1"/>
</dbReference>
<dbReference type="Pfam" id="PF01502">
    <property type="entry name" value="PRA-CH"/>
    <property type="match status" value="1"/>
</dbReference>
<dbReference type="SUPFAM" id="SSF141734">
    <property type="entry name" value="HisI-like"/>
    <property type="match status" value="1"/>
</dbReference>
<keyword id="KW-0028">Amino-acid biosynthesis</keyword>
<keyword id="KW-0963">Cytoplasm</keyword>
<keyword id="KW-0368">Histidine biosynthesis</keyword>
<keyword id="KW-0378">Hydrolase</keyword>
<keyword id="KW-0460">Magnesium</keyword>
<keyword id="KW-0479">Metal-binding</keyword>
<keyword id="KW-1185">Reference proteome</keyword>
<keyword id="KW-0862">Zinc</keyword>
<organism>
    <name type="scientific">Haloquadratum walsbyi (strain DSM 16790 / HBSQ001)</name>
    <dbReference type="NCBI Taxonomy" id="362976"/>
    <lineage>
        <taxon>Archaea</taxon>
        <taxon>Methanobacteriati</taxon>
        <taxon>Methanobacteriota</taxon>
        <taxon>Stenosarchaea group</taxon>
        <taxon>Halobacteria</taxon>
        <taxon>Halobacteriales</taxon>
        <taxon>Haloferacaceae</taxon>
        <taxon>Haloquadratum</taxon>
    </lineage>
</organism>
<protein>
    <recommendedName>
        <fullName evidence="1">Phosphoribosyl-AMP cyclohydrolase</fullName>
        <shortName evidence="1">PRA-CH</shortName>
        <ecNumber evidence="1">3.5.4.19</ecNumber>
    </recommendedName>
</protein>
<evidence type="ECO:0000255" key="1">
    <source>
        <dbReference type="HAMAP-Rule" id="MF_01021"/>
    </source>
</evidence>
<comment type="function">
    <text evidence="1">Catalyzes the hydrolysis of the adenine ring of phosphoribosyl-AMP.</text>
</comment>
<comment type="catalytic activity">
    <reaction evidence="1">
        <text>1-(5-phospho-beta-D-ribosyl)-5'-AMP + H2O = 1-(5-phospho-beta-D-ribosyl)-5-[(5-phospho-beta-D-ribosylamino)methylideneamino]imidazole-4-carboxamide</text>
        <dbReference type="Rhea" id="RHEA:20049"/>
        <dbReference type="ChEBI" id="CHEBI:15377"/>
        <dbReference type="ChEBI" id="CHEBI:58435"/>
        <dbReference type="ChEBI" id="CHEBI:59457"/>
        <dbReference type="EC" id="3.5.4.19"/>
    </reaction>
</comment>
<comment type="cofactor">
    <cofactor evidence="1">
        <name>Mg(2+)</name>
        <dbReference type="ChEBI" id="CHEBI:18420"/>
    </cofactor>
    <text evidence="1">Binds 1 Mg(2+) ion per subunit.</text>
</comment>
<comment type="cofactor">
    <cofactor evidence="1">
        <name>Zn(2+)</name>
        <dbReference type="ChEBI" id="CHEBI:29105"/>
    </cofactor>
    <text evidence="1">Binds 1 zinc ion per subunit.</text>
</comment>
<comment type="pathway">
    <text evidence="1">Amino-acid biosynthesis; L-histidine biosynthesis; L-histidine from 5-phospho-alpha-D-ribose 1-diphosphate: step 3/9.</text>
</comment>
<comment type="subunit">
    <text evidence="1">Homodimer.</text>
</comment>
<comment type="subcellular location">
    <subcellularLocation>
        <location evidence="1">Cytoplasm</location>
    </subcellularLocation>
</comment>
<comment type="similarity">
    <text evidence="1">Belongs to the PRA-CH family.</text>
</comment>
<name>HIS3_HALWD</name>
<accession>Q18DH0</accession>